<name>SYE_ACIBS</name>
<organism>
    <name type="scientific">Acinetobacter baumannii (strain SDF)</name>
    <dbReference type="NCBI Taxonomy" id="509170"/>
    <lineage>
        <taxon>Bacteria</taxon>
        <taxon>Pseudomonadati</taxon>
        <taxon>Pseudomonadota</taxon>
        <taxon>Gammaproteobacteria</taxon>
        <taxon>Moraxellales</taxon>
        <taxon>Moraxellaceae</taxon>
        <taxon>Acinetobacter</taxon>
        <taxon>Acinetobacter calcoaceticus/baumannii complex</taxon>
    </lineage>
</organism>
<proteinExistence type="inferred from homology"/>
<sequence>MKVRTRIAPSPTGFPHVGTAYIALFNMCFAKQHGGEFILRIEDTDQLRSTPESEKMILDSLRWLGLNWSEGPDVGGPHAPYRQSERMGIYKQYALELVEKGHAFYCFATAEELDQMRAEQQARGETPKYDGRGLKLSQEEVARRLEAGEPHVIRMKVPEEGVCKFNDLLRGEVEIPWAQVDMQVLLKTDGLPTYHLANVVDDHLMEITHVLRGEEWLPSAPKHQLLYQYFGWEMPTLCHMPLLRNPDKSKLSKRKNPTSINYYRDIGVLPEALLNYLGRMGWSMPDEREVFTLQDMMDNFDIQRVSLGGPIFDVEKLNWLNGQWIKGLTPGQLLDRLLTWKSDRSTLEDIAAAIQPRINLLSEAVNWAGFYFNHMPQITAEMFESKKLTQEQVRQSLQFAIWRLESQFTWNNDTVGQTLMDLANQMGIKLRDFMPTFFIAIAGSTSSTPVMQSMVTLGPDLTFARLRHALEIVGAPSKKEVKNWEKLNESLKLPKNEATSEA</sequence>
<reference key="1">
    <citation type="journal article" date="2008" name="PLoS ONE">
        <title>Comparative analysis of Acinetobacters: three genomes for three lifestyles.</title>
        <authorList>
            <person name="Vallenet D."/>
            <person name="Nordmann P."/>
            <person name="Barbe V."/>
            <person name="Poirel L."/>
            <person name="Mangenot S."/>
            <person name="Bataille E."/>
            <person name="Dossat C."/>
            <person name="Gas S."/>
            <person name="Kreimeyer A."/>
            <person name="Lenoble P."/>
            <person name="Oztas S."/>
            <person name="Poulain J."/>
            <person name="Segurens B."/>
            <person name="Robert C."/>
            <person name="Abergel C."/>
            <person name="Claverie J.-M."/>
            <person name="Raoult D."/>
            <person name="Medigue C."/>
            <person name="Weissenbach J."/>
            <person name="Cruveiller S."/>
        </authorList>
    </citation>
    <scope>NUCLEOTIDE SEQUENCE [LARGE SCALE GENOMIC DNA]</scope>
    <source>
        <strain>SDF</strain>
    </source>
</reference>
<dbReference type="EC" id="6.1.1.17" evidence="1"/>
<dbReference type="EMBL" id="CU468230">
    <property type="protein sequence ID" value="CAO99674.1"/>
    <property type="molecule type" value="Genomic_DNA"/>
</dbReference>
<dbReference type="SMR" id="B0VPF6"/>
<dbReference type="KEGG" id="abm:ABSDF0279"/>
<dbReference type="HOGENOM" id="CLU_015768_6_3_6"/>
<dbReference type="Proteomes" id="UP000001741">
    <property type="component" value="Chromosome"/>
</dbReference>
<dbReference type="GO" id="GO:0005829">
    <property type="term" value="C:cytosol"/>
    <property type="evidence" value="ECO:0007669"/>
    <property type="project" value="TreeGrafter"/>
</dbReference>
<dbReference type="GO" id="GO:0005524">
    <property type="term" value="F:ATP binding"/>
    <property type="evidence" value="ECO:0007669"/>
    <property type="project" value="UniProtKB-UniRule"/>
</dbReference>
<dbReference type="GO" id="GO:0004818">
    <property type="term" value="F:glutamate-tRNA ligase activity"/>
    <property type="evidence" value="ECO:0007669"/>
    <property type="project" value="UniProtKB-UniRule"/>
</dbReference>
<dbReference type="GO" id="GO:0000049">
    <property type="term" value="F:tRNA binding"/>
    <property type="evidence" value="ECO:0007669"/>
    <property type="project" value="InterPro"/>
</dbReference>
<dbReference type="GO" id="GO:0008270">
    <property type="term" value="F:zinc ion binding"/>
    <property type="evidence" value="ECO:0007669"/>
    <property type="project" value="InterPro"/>
</dbReference>
<dbReference type="GO" id="GO:0006424">
    <property type="term" value="P:glutamyl-tRNA aminoacylation"/>
    <property type="evidence" value="ECO:0007669"/>
    <property type="project" value="UniProtKB-UniRule"/>
</dbReference>
<dbReference type="CDD" id="cd00808">
    <property type="entry name" value="GluRS_core"/>
    <property type="match status" value="1"/>
</dbReference>
<dbReference type="FunFam" id="3.40.50.620:FF:000045">
    <property type="entry name" value="Glutamate--tRNA ligase, mitochondrial"/>
    <property type="match status" value="1"/>
</dbReference>
<dbReference type="Gene3D" id="1.10.10.350">
    <property type="match status" value="1"/>
</dbReference>
<dbReference type="Gene3D" id="3.40.50.620">
    <property type="entry name" value="HUPs"/>
    <property type="match status" value="1"/>
</dbReference>
<dbReference type="HAMAP" id="MF_00022">
    <property type="entry name" value="Glu_tRNA_synth_type1"/>
    <property type="match status" value="1"/>
</dbReference>
<dbReference type="InterPro" id="IPR045462">
    <property type="entry name" value="aa-tRNA-synth_I_cd-bd"/>
</dbReference>
<dbReference type="InterPro" id="IPR020751">
    <property type="entry name" value="aa-tRNA-synth_I_codon-bd_sub2"/>
</dbReference>
<dbReference type="InterPro" id="IPR001412">
    <property type="entry name" value="aa-tRNA-synth_I_CS"/>
</dbReference>
<dbReference type="InterPro" id="IPR008925">
    <property type="entry name" value="aa_tRNA-synth_I_cd-bd_sf"/>
</dbReference>
<dbReference type="InterPro" id="IPR004527">
    <property type="entry name" value="Glu-tRNA-ligase_bac/mito"/>
</dbReference>
<dbReference type="InterPro" id="IPR000924">
    <property type="entry name" value="Glu/Gln-tRNA-synth"/>
</dbReference>
<dbReference type="InterPro" id="IPR020058">
    <property type="entry name" value="Glu/Gln-tRNA-synth_Ib_cat-dom"/>
</dbReference>
<dbReference type="InterPro" id="IPR049940">
    <property type="entry name" value="GluQ/Sye"/>
</dbReference>
<dbReference type="InterPro" id="IPR033910">
    <property type="entry name" value="GluRS_core"/>
</dbReference>
<dbReference type="InterPro" id="IPR014729">
    <property type="entry name" value="Rossmann-like_a/b/a_fold"/>
</dbReference>
<dbReference type="NCBIfam" id="TIGR00464">
    <property type="entry name" value="gltX_bact"/>
    <property type="match status" value="1"/>
</dbReference>
<dbReference type="PANTHER" id="PTHR43311">
    <property type="entry name" value="GLUTAMATE--TRNA LIGASE"/>
    <property type="match status" value="1"/>
</dbReference>
<dbReference type="PANTHER" id="PTHR43311:SF2">
    <property type="entry name" value="GLUTAMATE--TRNA LIGASE, MITOCHONDRIAL-RELATED"/>
    <property type="match status" value="1"/>
</dbReference>
<dbReference type="Pfam" id="PF19269">
    <property type="entry name" value="Anticodon_2"/>
    <property type="match status" value="1"/>
</dbReference>
<dbReference type="Pfam" id="PF00749">
    <property type="entry name" value="tRNA-synt_1c"/>
    <property type="match status" value="1"/>
</dbReference>
<dbReference type="PRINTS" id="PR00987">
    <property type="entry name" value="TRNASYNTHGLU"/>
</dbReference>
<dbReference type="SUPFAM" id="SSF48163">
    <property type="entry name" value="An anticodon-binding domain of class I aminoacyl-tRNA synthetases"/>
    <property type="match status" value="1"/>
</dbReference>
<dbReference type="SUPFAM" id="SSF52374">
    <property type="entry name" value="Nucleotidylyl transferase"/>
    <property type="match status" value="1"/>
</dbReference>
<dbReference type="PROSITE" id="PS00178">
    <property type="entry name" value="AA_TRNA_LIGASE_I"/>
    <property type="match status" value="1"/>
</dbReference>
<protein>
    <recommendedName>
        <fullName evidence="1">Glutamate--tRNA ligase</fullName>
        <ecNumber evidence="1">6.1.1.17</ecNumber>
    </recommendedName>
    <alternativeName>
        <fullName evidence="1">Glutamyl-tRNA synthetase</fullName>
        <shortName evidence="1">GluRS</shortName>
    </alternativeName>
</protein>
<accession>B0VPF6</accession>
<comment type="function">
    <text evidence="1">Catalyzes the attachment of glutamate to tRNA(Glu) in a two-step reaction: glutamate is first activated by ATP to form Glu-AMP and then transferred to the acceptor end of tRNA(Glu).</text>
</comment>
<comment type="catalytic activity">
    <reaction evidence="1">
        <text>tRNA(Glu) + L-glutamate + ATP = L-glutamyl-tRNA(Glu) + AMP + diphosphate</text>
        <dbReference type="Rhea" id="RHEA:23540"/>
        <dbReference type="Rhea" id="RHEA-COMP:9663"/>
        <dbReference type="Rhea" id="RHEA-COMP:9680"/>
        <dbReference type="ChEBI" id="CHEBI:29985"/>
        <dbReference type="ChEBI" id="CHEBI:30616"/>
        <dbReference type="ChEBI" id="CHEBI:33019"/>
        <dbReference type="ChEBI" id="CHEBI:78442"/>
        <dbReference type="ChEBI" id="CHEBI:78520"/>
        <dbReference type="ChEBI" id="CHEBI:456215"/>
        <dbReference type="EC" id="6.1.1.17"/>
    </reaction>
</comment>
<comment type="subunit">
    <text evidence="1">Monomer.</text>
</comment>
<comment type="subcellular location">
    <subcellularLocation>
        <location evidence="1">Cytoplasm</location>
    </subcellularLocation>
</comment>
<comment type="similarity">
    <text evidence="1">Belongs to the class-I aminoacyl-tRNA synthetase family. Glutamate--tRNA ligase type 1 subfamily.</text>
</comment>
<feature type="chain" id="PRO_0000367603" description="Glutamate--tRNA ligase">
    <location>
        <begin position="1"/>
        <end position="502"/>
    </location>
</feature>
<feature type="short sequence motif" description="'HIGH' region" evidence="1">
    <location>
        <begin position="9"/>
        <end position="19"/>
    </location>
</feature>
<feature type="short sequence motif" description="'KMSKS' region" evidence="1">
    <location>
        <begin position="250"/>
        <end position="254"/>
    </location>
</feature>
<feature type="binding site" evidence="1">
    <location>
        <position position="253"/>
    </location>
    <ligand>
        <name>ATP</name>
        <dbReference type="ChEBI" id="CHEBI:30616"/>
    </ligand>
</feature>
<gene>
    <name evidence="1" type="primary">gltX</name>
    <name type="ordered locus">ABSDF0279</name>
</gene>
<keyword id="KW-0030">Aminoacyl-tRNA synthetase</keyword>
<keyword id="KW-0067">ATP-binding</keyword>
<keyword id="KW-0963">Cytoplasm</keyword>
<keyword id="KW-0436">Ligase</keyword>
<keyword id="KW-0547">Nucleotide-binding</keyword>
<keyword id="KW-0648">Protein biosynthesis</keyword>
<evidence type="ECO:0000255" key="1">
    <source>
        <dbReference type="HAMAP-Rule" id="MF_00022"/>
    </source>
</evidence>